<comment type="function">
    <text evidence="1">Endonuclease that specifically degrades the RNA of RNA-DNA hybrids.</text>
</comment>
<comment type="catalytic activity">
    <reaction evidence="1">
        <text>Endonucleolytic cleavage to 5'-phosphomonoester.</text>
        <dbReference type="EC" id="3.1.26.4"/>
    </reaction>
</comment>
<comment type="cofactor">
    <cofactor evidence="1">
        <name>Mn(2+)</name>
        <dbReference type="ChEBI" id="CHEBI:29035"/>
    </cofactor>
    <cofactor evidence="1">
        <name>Mg(2+)</name>
        <dbReference type="ChEBI" id="CHEBI:18420"/>
    </cofactor>
    <text evidence="1">Manganese or magnesium. Binds 1 divalent metal ion per monomer in the absence of substrate. May bind a second metal ion after substrate binding.</text>
</comment>
<comment type="subcellular location">
    <subcellularLocation>
        <location evidence="1">Cytoplasm</location>
    </subcellularLocation>
</comment>
<comment type="similarity">
    <text evidence="1">Belongs to the RNase HII family.</text>
</comment>
<evidence type="ECO:0000255" key="1">
    <source>
        <dbReference type="HAMAP-Rule" id="MF_00052"/>
    </source>
</evidence>
<evidence type="ECO:0000255" key="2">
    <source>
        <dbReference type="PROSITE-ProRule" id="PRU01319"/>
    </source>
</evidence>
<protein>
    <recommendedName>
        <fullName evidence="1">Ribonuclease HII</fullName>
        <shortName evidence="1">RNase HII</shortName>
        <ecNumber evidence="1">3.1.26.4</ecNumber>
    </recommendedName>
</protein>
<name>RNH2_STRGC</name>
<gene>
    <name evidence="1" type="primary">rnhB</name>
    <name type="ordered locus">SGO_1201</name>
</gene>
<proteinExistence type="inferred from homology"/>
<dbReference type="EC" id="3.1.26.4" evidence="1"/>
<dbReference type="EMBL" id="CP000725">
    <property type="protein sequence ID" value="ABV10482.1"/>
    <property type="molecule type" value="Genomic_DNA"/>
</dbReference>
<dbReference type="RefSeq" id="WP_012000603.1">
    <property type="nucleotide sequence ID" value="NC_009785.1"/>
</dbReference>
<dbReference type="SMR" id="A8AXH8"/>
<dbReference type="STRING" id="467705.SGO_1201"/>
<dbReference type="KEGG" id="sgo:SGO_1201"/>
<dbReference type="eggNOG" id="COG0164">
    <property type="taxonomic scope" value="Bacteria"/>
</dbReference>
<dbReference type="HOGENOM" id="CLU_036532_2_1_9"/>
<dbReference type="Proteomes" id="UP000001131">
    <property type="component" value="Chromosome"/>
</dbReference>
<dbReference type="GO" id="GO:0005737">
    <property type="term" value="C:cytoplasm"/>
    <property type="evidence" value="ECO:0007669"/>
    <property type="project" value="UniProtKB-SubCell"/>
</dbReference>
<dbReference type="GO" id="GO:0032299">
    <property type="term" value="C:ribonuclease H2 complex"/>
    <property type="evidence" value="ECO:0007669"/>
    <property type="project" value="TreeGrafter"/>
</dbReference>
<dbReference type="GO" id="GO:0030145">
    <property type="term" value="F:manganese ion binding"/>
    <property type="evidence" value="ECO:0007669"/>
    <property type="project" value="UniProtKB-UniRule"/>
</dbReference>
<dbReference type="GO" id="GO:0003723">
    <property type="term" value="F:RNA binding"/>
    <property type="evidence" value="ECO:0007669"/>
    <property type="project" value="InterPro"/>
</dbReference>
<dbReference type="GO" id="GO:0004523">
    <property type="term" value="F:RNA-DNA hybrid ribonuclease activity"/>
    <property type="evidence" value="ECO:0007669"/>
    <property type="project" value="UniProtKB-UniRule"/>
</dbReference>
<dbReference type="GO" id="GO:0043137">
    <property type="term" value="P:DNA replication, removal of RNA primer"/>
    <property type="evidence" value="ECO:0007669"/>
    <property type="project" value="TreeGrafter"/>
</dbReference>
<dbReference type="GO" id="GO:0006298">
    <property type="term" value="P:mismatch repair"/>
    <property type="evidence" value="ECO:0007669"/>
    <property type="project" value="TreeGrafter"/>
</dbReference>
<dbReference type="CDD" id="cd07182">
    <property type="entry name" value="RNase_HII_bacteria_HII_like"/>
    <property type="match status" value="1"/>
</dbReference>
<dbReference type="FunFam" id="3.30.420.10:FF:000006">
    <property type="entry name" value="Ribonuclease HII"/>
    <property type="match status" value="1"/>
</dbReference>
<dbReference type="Gene3D" id="3.30.420.10">
    <property type="entry name" value="Ribonuclease H-like superfamily/Ribonuclease H"/>
    <property type="match status" value="1"/>
</dbReference>
<dbReference type="HAMAP" id="MF_00052_B">
    <property type="entry name" value="RNase_HII_B"/>
    <property type="match status" value="1"/>
</dbReference>
<dbReference type="InterPro" id="IPR022898">
    <property type="entry name" value="RNase_HII"/>
</dbReference>
<dbReference type="InterPro" id="IPR001352">
    <property type="entry name" value="RNase_HII/HIII"/>
</dbReference>
<dbReference type="InterPro" id="IPR024567">
    <property type="entry name" value="RNase_HII/HIII_dom"/>
</dbReference>
<dbReference type="InterPro" id="IPR012337">
    <property type="entry name" value="RNaseH-like_sf"/>
</dbReference>
<dbReference type="InterPro" id="IPR036397">
    <property type="entry name" value="RNaseH_sf"/>
</dbReference>
<dbReference type="NCBIfam" id="NF000594">
    <property type="entry name" value="PRK00015.1-1"/>
    <property type="match status" value="1"/>
</dbReference>
<dbReference type="NCBIfam" id="NF000595">
    <property type="entry name" value="PRK00015.1-3"/>
    <property type="match status" value="1"/>
</dbReference>
<dbReference type="PANTHER" id="PTHR10954">
    <property type="entry name" value="RIBONUCLEASE H2 SUBUNIT A"/>
    <property type="match status" value="1"/>
</dbReference>
<dbReference type="PANTHER" id="PTHR10954:SF18">
    <property type="entry name" value="RIBONUCLEASE HII"/>
    <property type="match status" value="1"/>
</dbReference>
<dbReference type="Pfam" id="PF01351">
    <property type="entry name" value="RNase_HII"/>
    <property type="match status" value="1"/>
</dbReference>
<dbReference type="SUPFAM" id="SSF53098">
    <property type="entry name" value="Ribonuclease H-like"/>
    <property type="match status" value="1"/>
</dbReference>
<dbReference type="PROSITE" id="PS51975">
    <property type="entry name" value="RNASE_H_2"/>
    <property type="match status" value="1"/>
</dbReference>
<organism>
    <name type="scientific">Streptococcus gordonii (strain Challis / ATCC 35105 / BCRC 15272 / CH1 / DL1 / V288)</name>
    <dbReference type="NCBI Taxonomy" id="467705"/>
    <lineage>
        <taxon>Bacteria</taxon>
        <taxon>Bacillati</taxon>
        <taxon>Bacillota</taxon>
        <taxon>Bacilli</taxon>
        <taxon>Lactobacillales</taxon>
        <taxon>Streptococcaceae</taxon>
        <taxon>Streptococcus</taxon>
    </lineage>
</organism>
<keyword id="KW-0963">Cytoplasm</keyword>
<keyword id="KW-0255">Endonuclease</keyword>
<keyword id="KW-0378">Hydrolase</keyword>
<keyword id="KW-0464">Manganese</keyword>
<keyword id="KW-0479">Metal-binding</keyword>
<keyword id="KW-0540">Nuclease</keyword>
<keyword id="KW-1185">Reference proteome</keyword>
<sequence length="254" mass="28098">MATIKEIQQRLELVTELSDSFLEEVAKDQRSGVQKAVEKRKKAIQAELDEDLRLDQMIRYEKELYQSGYQAIAGIDEVGRGPLAGPVVAAAVILPPGCKIKGLNDSKKIPKKKHQEIYQAVMDKALAVGIGLMDSDIIDKVNIYEATKLAMKEALSKLPLKPDYLLIDAMKLDVEIPQESIIKGDANSLSIAAASIVAKVTRDRLMADYDKEFPGYAFAQNAGYGTKRHLEGLEHYGVSPIHRKTFEPVKSMLG</sequence>
<feature type="chain" id="PRO_1000074940" description="Ribonuclease HII">
    <location>
        <begin position="1"/>
        <end position="254"/>
    </location>
</feature>
<feature type="domain" description="RNase H type-2" evidence="2">
    <location>
        <begin position="70"/>
        <end position="254"/>
    </location>
</feature>
<feature type="binding site" evidence="1">
    <location>
        <position position="76"/>
    </location>
    <ligand>
        <name>a divalent metal cation</name>
        <dbReference type="ChEBI" id="CHEBI:60240"/>
    </ligand>
</feature>
<feature type="binding site" evidence="1">
    <location>
        <position position="77"/>
    </location>
    <ligand>
        <name>a divalent metal cation</name>
        <dbReference type="ChEBI" id="CHEBI:60240"/>
    </ligand>
</feature>
<feature type="binding site" evidence="1">
    <location>
        <position position="168"/>
    </location>
    <ligand>
        <name>a divalent metal cation</name>
        <dbReference type="ChEBI" id="CHEBI:60240"/>
    </ligand>
</feature>
<reference key="1">
    <citation type="journal article" date="2007" name="J. Bacteriol.">
        <title>Genome-wide transcriptional changes in Streptococcus gordonii in response to competence signaling peptide.</title>
        <authorList>
            <person name="Vickerman M.M."/>
            <person name="Iobst S."/>
            <person name="Jesionowski A.M."/>
            <person name="Gill S.R."/>
        </authorList>
    </citation>
    <scope>NUCLEOTIDE SEQUENCE [LARGE SCALE GENOMIC DNA]</scope>
    <source>
        <strain>Challis / ATCC 35105 / BCRC 15272 / CH1 / DL1 / V288</strain>
    </source>
</reference>
<accession>A8AXH8</accession>